<keyword id="KW-0963">Cytoplasm</keyword>
<keyword id="KW-0238">DNA-binding</keyword>
<keyword id="KW-1185">Reference proteome</keyword>
<keyword id="KW-0804">Transcription</keyword>
<keyword id="KW-0805">Transcription regulation</keyword>
<organism>
    <name type="scientific">Roseobacter denitrificans (strain ATCC 33942 / OCh 114)</name>
    <name type="common">Erythrobacter sp. (strain OCh 114)</name>
    <name type="synonym">Roseobacter denitrificans</name>
    <dbReference type="NCBI Taxonomy" id="375451"/>
    <lineage>
        <taxon>Bacteria</taxon>
        <taxon>Pseudomonadati</taxon>
        <taxon>Pseudomonadota</taxon>
        <taxon>Alphaproteobacteria</taxon>
        <taxon>Rhodobacterales</taxon>
        <taxon>Roseobacteraceae</taxon>
        <taxon>Roseobacter</taxon>
    </lineage>
</organism>
<reference key="1">
    <citation type="journal article" date="2007" name="J. Bacteriol.">
        <title>The complete genome sequence of Roseobacter denitrificans reveals a mixotrophic rather than photosynthetic metabolism.</title>
        <authorList>
            <person name="Swingley W.D."/>
            <person name="Sadekar S."/>
            <person name="Mastrian S.D."/>
            <person name="Matthies H.J."/>
            <person name="Hao J."/>
            <person name="Ramos H."/>
            <person name="Acharya C.R."/>
            <person name="Conrad A.L."/>
            <person name="Taylor H.L."/>
            <person name="Dejesa L.C."/>
            <person name="Shah M.K."/>
            <person name="O'Huallachain M.E."/>
            <person name="Lince M.T."/>
            <person name="Blankenship R.E."/>
            <person name="Beatty J.T."/>
            <person name="Touchman J.W."/>
        </authorList>
    </citation>
    <scope>NUCLEOTIDE SEQUENCE [LARGE SCALE GENOMIC DNA]</scope>
    <source>
        <strain>ATCC 33942 / OCh 114</strain>
    </source>
</reference>
<proteinExistence type="inferred from homology"/>
<accession>Q168H2</accession>
<evidence type="ECO:0000255" key="1">
    <source>
        <dbReference type="HAMAP-Rule" id="MF_00693"/>
    </source>
</evidence>
<name>Y2018_ROSDO</name>
<protein>
    <recommendedName>
        <fullName evidence="1">Probable transcriptional regulatory protein RD1_2018</fullName>
    </recommendedName>
</protein>
<dbReference type="EMBL" id="CP000362">
    <property type="protein sequence ID" value="ABG31621.1"/>
    <property type="molecule type" value="Genomic_DNA"/>
</dbReference>
<dbReference type="RefSeq" id="WP_011568238.1">
    <property type="nucleotide sequence ID" value="NC_008209.1"/>
</dbReference>
<dbReference type="SMR" id="Q168H2"/>
<dbReference type="STRING" id="375451.RD1_2018"/>
<dbReference type="KEGG" id="rde:RD1_2018"/>
<dbReference type="eggNOG" id="COG0217">
    <property type="taxonomic scope" value="Bacteria"/>
</dbReference>
<dbReference type="HOGENOM" id="CLU_062974_2_2_5"/>
<dbReference type="OrthoDB" id="9781053at2"/>
<dbReference type="Proteomes" id="UP000007029">
    <property type="component" value="Chromosome"/>
</dbReference>
<dbReference type="GO" id="GO:0005829">
    <property type="term" value="C:cytosol"/>
    <property type="evidence" value="ECO:0007669"/>
    <property type="project" value="TreeGrafter"/>
</dbReference>
<dbReference type="GO" id="GO:0003677">
    <property type="term" value="F:DNA binding"/>
    <property type="evidence" value="ECO:0007669"/>
    <property type="project" value="UniProtKB-UniRule"/>
</dbReference>
<dbReference type="GO" id="GO:0006355">
    <property type="term" value="P:regulation of DNA-templated transcription"/>
    <property type="evidence" value="ECO:0007669"/>
    <property type="project" value="UniProtKB-UniRule"/>
</dbReference>
<dbReference type="FunFam" id="1.10.10.200:FF:000002">
    <property type="entry name" value="Probable transcriptional regulatory protein CLM62_37755"/>
    <property type="match status" value="1"/>
</dbReference>
<dbReference type="Gene3D" id="1.10.10.200">
    <property type="match status" value="1"/>
</dbReference>
<dbReference type="Gene3D" id="3.30.70.980">
    <property type="match status" value="2"/>
</dbReference>
<dbReference type="HAMAP" id="MF_00693">
    <property type="entry name" value="Transcrip_reg_TACO1"/>
    <property type="match status" value="1"/>
</dbReference>
<dbReference type="InterPro" id="IPR017856">
    <property type="entry name" value="Integrase-like_N"/>
</dbReference>
<dbReference type="InterPro" id="IPR048300">
    <property type="entry name" value="TACO1_YebC-like_2nd/3rd_dom"/>
</dbReference>
<dbReference type="InterPro" id="IPR049083">
    <property type="entry name" value="TACO1_YebC_N"/>
</dbReference>
<dbReference type="InterPro" id="IPR002876">
    <property type="entry name" value="Transcrip_reg_TACO1-like"/>
</dbReference>
<dbReference type="InterPro" id="IPR026564">
    <property type="entry name" value="Transcrip_reg_TACO1-like_dom3"/>
</dbReference>
<dbReference type="InterPro" id="IPR029072">
    <property type="entry name" value="YebC-like"/>
</dbReference>
<dbReference type="NCBIfam" id="NF001030">
    <property type="entry name" value="PRK00110.1"/>
    <property type="match status" value="1"/>
</dbReference>
<dbReference type="NCBIfam" id="NF009044">
    <property type="entry name" value="PRK12378.1"/>
    <property type="match status" value="1"/>
</dbReference>
<dbReference type="NCBIfam" id="TIGR01033">
    <property type="entry name" value="YebC/PmpR family DNA-binding transcriptional regulator"/>
    <property type="match status" value="1"/>
</dbReference>
<dbReference type="PANTHER" id="PTHR12532:SF6">
    <property type="entry name" value="TRANSCRIPTIONAL REGULATORY PROTEIN YEBC-RELATED"/>
    <property type="match status" value="1"/>
</dbReference>
<dbReference type="PANTHER" id="PTHR12532">
    <property type="entry name" value="TRANSLATIONAL ACTIVATOR OF CYTOCHROME C OXIDASE 1"/>
    <property type="match status" value="1"/>
</dbReference>
<dbReference type="Pfam" id="PF20772">
    <property type="entry name" value="TACO1_YebC_N"/>
    <property type="match status" value="1"/>
</dbReference>
<dbReference type="Pfam" id="PF01709">
    <property type="entry name" value="Transcrip_reg"/>
    <property type="match status" value="1"/>
</dbReference>
<dbReference type="SUPFAM" id="SSF75625">
    <property type="entry name" value="YebC-like"/>
    <property type="match status" value="1"/>
</dbReference>
<comment type="subcellular location">
    <subcellularLocation>
        <location evidence="1">Cytoplasm</location>
    </subcellularLocation>
</comment>
<comment type="similarity">
    <text evidence="1">Belongs to the TACO1 family.</text>
</comment>
<sequence>MAGHSKWANIQHRKGRQDAVRAKLFSKLSKEITVAAKMGDPDPDKNPRLRLAVKEAKSQSMPKDNIDRAIKKSQAGDGDEYEEIRYEGYGPNGVAVIVEAMTDNRNRTASTVRSTFTKNGGNLGETGSVGFMFDRKGTVTYPADVGDADTVLMAAIEAGAEDVESSEDGHVIWCADTDLNEVATALEAELGESEQTKLVWRPTTTTELDLEGMQKLMRLIEALEDDDDVQRVTANFEASDEVMEQL</sequence>
<gene>
    <name type="ordered locus">RD1_2018</name>
</gene>
<feature type="chain" id="PRO_0000257122" description="Probable transcriptional regulatory protein RD1_2018">
    <location>
        <begin position="1"/>
        <end position="246"/>
    </location>
</feature>